<reference key="1">
    <citation type="submission" date="2007-06" db="EMBL/GenBank/DDBJ databases">
        <title>Complete sequence of Marinomonas sp. MWYL1.</title>
        <authorList>
            <consortium name="US DOE Joint Genome Institute"/>
            <person name="Copeland A."/>
            <person name="Lucas S."/>
            <person name="Lapidus A."/>
            <person name="Barry K."/>
            <person name="Glavina del Rio T."/>
            <person name="Dalin E."/>
            <person name="Tice H."/>
            <person name="Pitluck S."/>
            <person name="Kiss H."/>
            <person name="Brettin T."/>
            <person name="Bruce D."/>
            <person name="Detter J.C."/>
            <person name="Han C."/>
            <person name="Schmutz J."/>
            <person name="Larimer F."/>
            <person name="Land M."/>
            <person name="Hauser L."/>
            <person name="Kyrpides N."/>
            <person name="Kim E."/>
            <person name="Johnston A.W.B."/>
            <person name="Todd J.D."/>
            <person name="Rogers R."/>
            <person name="Wexler M."/>
            <person name="Bond P.L."/>
            <person name="Li Y."/>
            <person name="Richardson P."/>
        </authorList>
    </citation>
    <scope>NUCLEOTIDE SEQUENCE [LARGE SCALE GENOMIC DNA]</scope>
    <source>
        <strain>MWYL1</strain>
    </source>
</reference>
<keyword id="KW-0067">ATP-binding</keyword>
<keyword id="KW-0963">Cytoplasm</keyword>
<keyword id="KW-0235">DNA replication</keyword>
<keyword id="KW-0238">DNA-binding</keyword>
<keyword id="KW-0446">Lipid-binding</keyword>
<keyword id="KW-0547">Nucleotide-binding</keyword>
<accession>A6VR65</accession>
<proteinExistence type="inferred from homology"/>
<dbReference type="EMBL" id="CP000749">
    <property type="protein sequence ID" value="ABR68944.1"/>
    <property type="molecule type" value="Genomic_DNA"/>
</dbReference>
<dbReference type="SMR" id="A6VR65"/>
<dbReference type="STRING" id="400668.Mmwyl1_0001"/>
<dbReference type="KEGG" id="mmw:Mmwyl1_0001"/>
<dbReference type="eggNOG" id="COG0593">
    <property type="taxonomic scope" value="Bacteria"/>
</dbReference>
<dbReference type="HOGENOM" id="CLU_026910_0_1_6"/>
<dbReference type="OrthoDB" id="9807019at2"/>
<dbReference type="GO" id="GO:0005737">
    <property type="term" value="C:cytoplasm"/>
    <property type="evidence" value="ECO:0007669"/>
    <property type="project" value="UniProtKB-SubCell"/>
</dbReference>
<dbReference type="GO" id="GO:0005886">
    <property type="term" value="C:plasma membrane"/>
    <property type="evidence" value="ECO:0007669"/>
    <property type="project" value="TreeGrafter"/>
</dbReference>
<dbReference type="GO" id="GO:0005524">
    <property type="term" value="F:ATP binding"/>
    <property type="evidence" value="ECO:0007669"/>
    <property type="project" value="UniProtKB-UniRule"/>
</dbReference>
<dbReference type="GO" id="GO:0016887">
    <property type="term" value="F:ATP hydrolysis activity"/>
    <property type="evidence" value="ECO:0007669"/>
    <property type="project" value="InterPro"/>
</dbReference>
<dbReference type="GO" id="GO:0003688">
    <property type="term" value="F:DNA replication origin binding"/>
    <property type="evidence" value="ECO:0007669"/>
    <property type="project" value="UniProtKB-UniRule"/>
</dbReference>
<dbReference type="GO" id="GO:0008289">
    <property type="term" value="F:lipid binding"/>
    <property type="evidence" value="ECO:0007669"/>
    <property type="project" value="UniProtKB-KW"/>
</dbReference>
<dbReference type="GO" id="GO:0006270">
    <property type="term" value="P:DNA replication initiation"/>
    <property type="evidence" value="ECO:0007669"/>
    <property type="project" value="UniProtKB-UniRule"/>
</dbReference>
<dbReference type="GO" id="GO:0006275">
    <property type="term" value="P:regulation of DNA replication"/>
    <property type="evidence" value="ECO:0007669"/>
    <property type="project" value="UniProtKB-UniRule"/>
</dbReference>
<dbReference type="CDD" id="cd00009">
    <property type="entry name" value="AAA"/>
    <property type="match status" value="1"/>
</dbReference>
<dbReference type="CDD" id="cd06571">
    <property type="entry name" value="Bac_DnaA_C"/>
    <property type="match status" value="1"/>
</dbReference>
<dbReference type="FunFam" id="1.10.1750.10:FF:000001">
    <property type="entry name" value="Chromosomal replication initiator protein DnaA"/>
    <property type="match status" value="1"/>
</dbReference>
<dbReference type="FunFam" id="1.10.8.60:FF:000003">
    <property type="entry name" value="Chromosomal replication initiator protein DnaA"/>
    <property type="match status" value="1"/>
</dbReference>
<dbReference type="FunFam" id="3.40.50.300:FF:000103">
    <property type="entry name" value="Chromosomal replication initiator protein DnaA"/>
    <property type="match status" value="1"/>
</dbReference>
<dbReference type="Gene3D" id="1.10.1750.10">
    <property type="match status" value="1"/>
</dbReference>
<dbReference type="Gene3D" id="1.10.8.60">
    <property type="match status" value="1"/>
</dbReference>
<dbReference type="Gene3D" id="3.30.300.180">
    <property type="match status" value="1"/>
</dbReference>
<dbReference type="Gene3D" id="3.40.50.300">
    <property type="entry name" value="P-loop containing nucleotide triphosphate hydrolases"/>
    <property type="match status" value="1"/>
</dbReference>
<dbReference type="HAMAP" id="MF_00377">
    <property type="entry name" value="DnaA_bact"/>
    <property type="match status" value="1"/>
</dbReference>
<dbReference type="InterPro" id="IPR003593">
    <property type="entry name" value="AAA+_ATPase"/>
</dbReference>
<dbReference type="InterPro" id="IPR001957">
    <property type="entry name" value="Chromosome_initiator_DnaA"/>
</dbReference>
<dbReference type="InterPro" id="IPR020591">
    <property type="entry name" value="Chromosome_initiator_DnaA-like"/>
</dbReference>
<dbReference type="InterPro" id="IPR013159">
    <property type="entry name" value="DnaA_C"/>
</dbReference>
<dbReference type="InterPro" id="IPR013317">
    <property type="entry name" value="DnaA_dom"/>
</dbReference>
<dbReference type="InterPro" id="IPR024633">
    <property type="entry name" value="DnaA_N_dom"/>
</dbReference>
<dbReference type="InterPro" id="IPR038454">
    <property type="entry name" value="DnaA_N_sf"/>
</dbReference>
<dbReference type="InterPro" id="IPR027417">
    <property type="entry name" value="P-loop_NTPase"/>
</dbReference>
<dbReference type="InterPro" id="IPR010921">
    <property type="entry name" value="Trp_repressor/repl_initiator"/>
</dbReference>
<dbReference type="NCBIfam" id="TIGR00362">
    <property type="entry name" value="DnaA"/>
    <property type="match status" value="1"/>
</dbReference>
<dbReference type="PANTHER" id="PTHR30050">
    <property type="entry name" value="CHROMOSOMAL REPLICATION INITIATOR PROTEIN DNAA"/>
    <property type="match status" value="1"/>
</dbReference>
<dbReference type="PANTHER" id="PTHR30050:SF2">
    <property type="entry name" value="CHROMOSOMAL REPLICATION INITIATOR PROTEIN DNAA"/>
    <property type="match status" value="1"/>
</dbReference>
<dbReference type="Pfam" id="PF00308">
    <property type="entry name" value="Bac_DnaA"/>
    <property type="match status" value="1"/>
</dbReference>
<dbReference type="Pfam" id="PF08299">
    <property type="entry name" value="Bac_DnaA_C"/>
    <property type="match status" value="1"/>
</dbReference>
<dbReference type="Pfam" id="PF11638">
    <property type="entry name" value="DnaA_N"/>
    <property type="match status" value="1"/>
</dbReference>
<dbReference type="PRINTS" id="PR00051">
    <property type="entry name" value="DNAA"/>
</dbReference>
<dbReference type="SMART" id="SM00382">
    <property type="entry name" value="AAA"/>
    <property type="match status" value="1"/>
</dbReference>
<dbReference type="SMART" id="SM00760">
    <property type="entry name" value="Bac_DnaA_C"/>
    <property type="match status" value="1"/>
</dbReference>
<dbReference type="SUPFAM" id="SSF52540">
    <property type="entry name" value="P-loop containing nucleoside triphosphate hydrolases"/>
    <property type="match status" value="1"/>
</dbReference>
<dbReference type="SUPFAM" id="SSF48295">
    <property type="entry name" value="TrpR-like"/>
    <property type="match status" value="1"/>
</dbReference>
<comment type="function">
    <text evidence="1">Plays an essential role in the initiation and regulation of chromosomal replication. ATP-DnaA binds to the origin of replication (oriC) to initiate formation of the DNA replication initiation complex once per cell cycle. Binds the DnaA box (a 9 base pair repeat at the origin) and separates the double-stranded (ds)DNA. Forms a right-handed helical filament on oriC DNA; dsDNA binds to the exterior of the filament while single-stranded (ss)DNA is stabiized in the filament's interior. The ATP-DnaA-oriC complex binds and stabilizes one strand of the AT-rich DNA unwinding element (DUE), permitting loading of DNA polymerase. After initiation quickly degrades to an ADP-DnaA complex that is not apt for DNA replication. Binds acidic phospholipids.</text>
</comment>
<comment type="subunit">
    <text evidence="1">Oligomerizes as a right-handed, spiral filament on DNA at oriC.</text>
</comment>
<comment type="subcellular location">
    <subcellularLocation>
        <location evidence="1">Cytoplasm</location>
    </subcellularLocation>
</comment>
<comment type="domain">
    <text evidence="1">Domain I is involved in oligomerization and binding regulators, domain II is flexibile and of varying length in different bacteria, domain III forms the AAA+ region, while domain IV binds dsDNA.</text>
</comment>
<comment type="similarity">
    <text evidence="1">Belongs to the DnaA family.</text>
</comment>
<evidence type="ECO:0000255" key="1">
    <source>
        <dbReference type="HAMAP-Rule" id="MF_00377"/>
    </source>
</evidence>
<protein>
    <recommendedName>
        <fullName evidence="1">Chromosomal replication initiator protein DnaA</fullName>
    </recommendedName>
</protein>
<feature type="chain" id="PRO_1000079955" description="Chromosomal replication initiator protein DnaA">
    <location>
        <begin position="1"/>
        <end position="516"/>
    </location>
</feature>
<feature type="region of interest" description="Domain I, interacts with DnaA modulators" evidence="1">
    <location>
        <begin position="1"/>
        <end position="72"/>
    </location>
</feature>
<feature type="region of interest" description="Domain II" evidence="1">
    <location>
        <begin position="72"/>
        <end position="179"/>
    </location>
</feature>
<feature type="region of interest" description="Domain III, AAA+ region" evidence="1">
    <location>
        <begin position="180"/>
        <end position="396"/>
    </location>
</feature>
<feature type="region of interest" description="Domain IV, binds dsDNA" evidence="1">
    <location>
        <begin position="397"/>
        <end position="516"/>
    </location>
</feature>
<feature type="binding site" evidence="1">
    <location>
        <position position="224"/>
    </location>
    <ligand>
        <name>ATP</name>
        <dbReference type="ChEBI" id="CHEBI:30616"/>
    </ligand>
</feature>
<feature type="binding site" evidence="1">
    <location>
        <position position="226"/>
    </location>
    <ligand>
        <name>ATP</name>
        <dbReference type="ChEBI" id="CHEBI:30616"/>
    </ligand>
</feature>
<feature type="binding site" evidence="1">
    <location>
        <position position="227"/>
    </location>
    <ligand>
        <name>ATP</name>
        <dbReference type="ChEBI" id="CHEBI:30616"/>
    </ligand>
</feature>
<feature type="binding site" evidence="1">
    <location>
        <position position="228"/>
    </location>
    <ligand>
        <name>ATP</name>
        <dbReference type="ChEBI" id="CHEBI:30616"/>
    </ligand>
</feature>
<gene>
    <name evidence="1" type="primary">dnaA</name>
    <name type="ordered locus">Mmwyl1_0001</name>
</gene>
<name>DNAA_MARMS</name>
<organism>
    <name type="scientific">Marinomonas sp. (strain MWYL1)</name>
    <dbReference type="NCBI Taxonomy" id="400668"/>
    <lineage>
        <taxon>Bacteria</taxon>
        <taxon>Pseudomonadati</taxon>
        <taxon>Pseudomonadota</taxon>
        <taxon>Gammaproteobacteria</taxon>
        <taxon>Oceanospirillales</taxon>
        <taxon>Oceanospirillaceae</taxon>
        <taxon>Marinomonas</taxon>
    </lineage>
</organism>
<sequence>MSLEHWNLCLQRLQSEFSTSQFNTWIRPLQAEMLPNGELCLSAPNRFVLDWVSNKYQTRIKELLSEFAGDDLAPALKLAVKAQNFAQANQMSPPPPPVSSEPAINPLNNEVARESGYRPGFGLMDDEEGSPNADLEFEAPLTLSGTGLRGELEPYEQGQLPLTAPKRKVQVEGGINHGANLNNSFTFDNFIEGKSNQLAHAAALQVAENPGGAYNPLFIYGGVGLGKTHLMQAVGTEMMRHNPNAKVVYLHSERFVADMVKALQLNAINDFKRYYRSVDALLIDDIQFFAGKDRTQEEFFHTFNALLEGGQQMILTCDRYPKEIQGLEDRLKSRFGWGLTVAIEPPELETRVAILMRKADESGIKLSYDSAFFIAQKIRSNVRELEGALKRVIANSHFTGRAITPDFVRESLKDLLALQDKLVNIDNIQRIVAEYYKIKISDLLSKRRSRSVARPRQVAMSLAKELTNHSLPEIGDAFGGRDHTTALHAIRKIKELQDTDSDIREDYKQLMRILTT</sequence>